<sequence>MARTNTRKAILAGGCFWGIQNLFRRQPGVISTRVGYTGGGTPNATYRNHGMHAEAVEIIYDPAITDYRTLLEFFFQIHDPTTRNRQGNDQGTSYRSAIFYLDDEQKKVALDTIAAVEASSLWPGKVVTEVSLAEDFWEAEPEHQDYLQHYPNGYTCHFVRPNWKLPRRAPADAKADS</sequence>
<feature type="chain" id="PRO_1000184567" description="Peptide methionine sulfoxide reductase MsrA">
    <location>
        <begin position="1"/>
        <end position="177"/>
    </location>
</feature>
<feature type="active site" evidence="1">
    <location>
        <position position="15"/>
    </location>
</feature>
<proteinExistence type="inferred from homology"/>
<reference key="1">
    <citation type="journal article" date="2009" name="Nat. Genet.">
        <title>Comparative genomic and phylogeographic analysis of Mycobacterium leprae.</title>
        <authorList>
            <person name="Monot M."/>
            <person name="Honore N."/>
            <person name="Garnier T."/>
            <person name="Zidane N."/>
            <person name="Sherafi D."/>
            <person name="Paniz-Mondolfi A."/>
            <person name="Matsuoka M."/>
            <person name="Taylor G.M."/>
            <person name="Donoghue H.D."/>
            <person name="Bouwman A."/>
            <person name="Mays S."/>
            <person name="Watson C."/>
            <person name="Lockwood D."/>
            <person name="Khamispour A."/>
            <person name="Dowlati Y."/>
            <person name="Jianping S."/>
            <person name="Rea T.H."/>
            <person name="Vera-Cabrera L."/>
            <person name="Stefani M.M."/>
            <person name="Banu S."/>
            <person name="Macdonald M."/>
            <person name="Sapkota B.R."/>
            <person name="Spencer J.S."/>
            <person name="Thomas J."/>
            <person name="Harshman K."/>
            <person name="Singh P."/>
            <person name="Busso P."/>
            <person name="Gattiker A."/>
            <person name="Rougemont J."/>
            <person name="Brennan P.J."/>
            <person name="Cole S.T."/>
        </authorList>
    </citation>
    <scope>NUCLEOTIDE SEQUENCE [LARGE SCALE GENOMIC DNA]</scope>
    <source>
        <strain>Br4923</strain>
    </source>
</reference>
<comment type="function">
    <text evidence="1">Has an important function as a repair enzyme for proteins that have been inactivated by oxidation. Catalyzes the reversible oxidation-reduction of methionine sulfoxide in proteins to methionine.</text>
</comment>
<comment type="catalytic activity">
    <reaction evidence="1">
        <text>L-methionyl-[protein] + [thioredoxin]-disulfide + H2O = L-methionyl-(S)-S-oxide-[protein] + [thioredoxin]-dithiol</text>
        <dbReference type="Rhea" id="RHEA:14217"/>
        <dbReference type="Rhea" id="RHEA-COMP:10698"/>
        <dbReference type="Rhea" id="RHEA-COMP:10700"/>
        <dbReference type="Rhea" id="RHEA-COMP:12313"/>
        <dbReference type="Rhea" id="RHEA-COMP:12315"/>
        <dbReference type="ChEBI" id="CHEBI:15377"/>
        <dbReference type="ChEBI" id="CHEBI:16044"/>
        <dbReference type="ChEBI" id="CHEBI:29950"/>
        <dbReference type="ChEBI" id="CHEBI:44120"/>
        <dbReference type="ChEBI" id="CHEBI:50058"/>
        <dbReference type="EC" id="1.8.4.11"/>
    </reaction>
</comment>
<comment type="catalytic activity">
    <reaction evidence="1">
        <text>[thioredoxin]-disulfide + L-methionine + H2O = L-methionine (S)-S-oxide + [thioredoxin]-dithiol</text>
        <dbReference type="Rhea" id="RHEA:19993"/>
        <dbReference type="Rhea" id="RHEA-COMP:10698"/>
        <dbReference type="Rhea" id="RHEA-COMP:10700"/>
        <dbReference type="ChEBI" id="CHEBI:15377"/>
        <dbReference type="ChEBI" id="CHEBI:29950"/>
        <dbReference type="ChEBI" id="CHEBI:50058"/>
        <dbReference type="ChEBI" id="CHEBI:57844"/>
        <dbReference type="ChEBI" id="CHEBI:58772"/>
        <dbReference type="EC" id="1.8.4.11"/>
    </reaction>
</comment>
<comment type="similarity">
    <text evidence="1">Belongs to the MsrA Met sulfoxide reductase family.</text>
</comment>
<dbReference type="EC" id="1.8.4.11" evidence="1"/>
<dbReference type="EMBL" id="FM211192">
    <property type="protein sequence ID" value="CAR72747.1"/>
    <property type="molecule type" value="Genomic_DNA"/>
</dbReference>
<dbReference type="SMR" id="B8ZTJ5"/>
<dbReference type="KEGG" id="mlb:MLBr02647"/>
<dbReference type="HOGENOM" id="CLU_031040_10_2_11"/>
<dbReference type="Proteomes" id="UP000006900">
    <property type="component" value="Chromosome"/>
</dbReference>
<dbReference type="GO" id="GO:0033744">
    <property type="term" value="F:L-methionine:thioredoxin-disulfide S-oxidoreductase activity"/>
    <property type="evidence" value="ECO:0007669"/>
    <property type="project" value="RHEA"/>
</dbReference>
<dbReference type="GO" id="GO:0008113">
    <property type="term" value="F:peptide-methionine (S)-S-oxide reductase activity"/>
    <property type="evidence" value="ECO:0007669"/>
    <property type="project" value="UniProtKB-UniRule"/>
</dbReference>
<dbReference type="GO" id="GO:0036211">
    <property type="term" value="P:protein modification process"/>
    <property type="evidence" value="ECO:0007669"/>
    <property type="project" value="UniProtKB-UniRule"/>
</dbReference>
<dbReference type="FunFam" id="3.30.1060.10:FF:000005">
    <property type="entry name" value="Peptide methionine sulfoxide reductase MsrA"/>
    <property type="match status" value="1"/>
</dbReference>
<dbReference type="Gene3D" id="3.30.1060.10">
    <property type="entry name" value="Peptide methionine sulphoxide reductase MsrA"/>
    <property type="match status" value="1"/>
</dbReference>
<dbReference type="HAMAP" id="MF_01401">
    <property type="entry name" value="MsrA"/>
    <property type="match status" value="1"/>
</dbReference>
<dbReference type="InterPro" id="IPR002569">
    <property type="entry name" value="Met_Sox_Rdtase_MsrA_dom"/>
</dbReference>
<dbReference type="InterPro" id="IPR036509">
    <property type="entry name" value="Met_Sox_Rdtase_MsrA_sf"/>
</dbReference>
<dbReference type="NCBIfam" id="TIGR00401">
    <property type="entry name" value="msrA"/>
    <property type="match status" value="1"/>
</dbReference>
<dbReference type="PANTHER" id="PTHR43774">
    <property type="entry name" value="PEPTIDE METHIONINE SULFOXIDE REDUCTASE"/>
    <property type="match status" value="1"/>
</dbReference>
<dbReference type="PANTHER" id="PTHR43774:SF1">
    <property type="entry name" value="PEPTIDE METHIONINE SULFOXIDE REDUCTASE MSRA 2"/>
    <property type="match status" value="1"/>
</dbReference>
<dbReference type="Pfam" id="PF01625">
    <property type="entry name" value="PMSR"/>
    <property type="match status" value="1"/>
</dbReference>
<dbReference type="SUPFAM" id="SSF55068">
    <property type="entry name" value="Peptide methionine sulfoxide reductase"/>
    <property type="match status" value="1"/>
</dbReference>
<gene>
    <name evidence="1" type="primary">msrA</name>
    <name type="ordered locus">MLBr02647</name>
</gene>
<protein>
    <recommendedName>
        <fullName evidence="1">Peptide methionine sulfoxide reductase MsrA</fullName>
        <shortName evidence="1">Protein-methionine-S-oxide reductase</shortName>
        <ecNumber evidence="1">1.8.4.11</ecNumber>
    </recommendedName>
    <alternativeName>
        <fullName evidence="1">Peptide-methionine (S)-S-oxide reductase</fullName>
        <shortName evidence="1">Peptide Met(O) reductase</shortName>
    </alternativeName>
</protein>
<organism>
    <name type="scientific">Mycobacterium leprae (strain Br4923)</name>
    <dbReference type="NCBI Taxonomy" id="561304"/>
    <lineage>
        <taxon>Bacteria</taxon>
        <taxon>Bacillati</taxon>
        <taxon>Actinomycetota</taxon>
        <taxon>Actinomycetes</taxon>
        <taxon>Mycobacteriales</taxon>
        <taxon>Mycobacteriaceae</taxon>
        <taxon>Mycobacterium</taxon>
    </lineage>
</organism>
<accession>B8ZTJ5</accession>
<keyword id="KW-0560">Oxidoreductase</keyword>
<evidence type="ECO:0000255" key="1">
    <source>
        <dbReference type="HAMAP-Rule" id="MF_01401"/>
    </source>
</evidence>
<name>MSRA_MYCLB</name>